<organism>
    <name type="scientific">Homarus americanus</name>
    <name type="common">American lobster</name>
    <dbReference type="NCBI Taxonomy" id="6706"/>
    <lineage>
        <taxon>Eukaryota</taxon>
        <taxon>Metazoa</taxon>
        <taxon>Ecdysozoa</taxon>
        <taxon>Arthropoda</taxon>
        <taxon>Crustacea</taxon>
        <taxon>Multicrustacea</taxon>
        <taxon>Malacostraca</taxon>
        <taxon>Eumalacostraca</taxon>
        <taxon>Eucarida</taxon>
        <taxon>Decapoda</taxon>
        <taxon>Pleocyemata</taxon>
        <taxon>Astacidea</taxon>
        <taxon>Nephropoidea</taxon>
        <taxon>Nephropidae</taxon>
        <taxon>Homarus</taxon>
    </lineage>
</organism>
<comment type="function">
    <text>Troponin is the central regulatory protein of striated muscle contraction. Tn consists of three components: Tn-I which is the inhibitor of actomyosin ATPase, Tn-T which contains the binding site for tropomyosin and Tn-C. The binding of calcium to Tn-C abolishes the inhibitory action of Tn on actin filaments.</text>
</comment>
<comment type="miscellaneous">
    <text>This protein binds two calcium ions.</text>
</comment>
<comment type="miscellaneous">
    <text>There are three different troponin C in lobster.</text>
</comment>
<comment type="similarity">
    <text evidence="3">Belongs to the troponin C family.</text>
</comment>
<proteinExistence type="evidence at protein level"/>
<feature type="chain" id="PRO_0000073690" description="Troponin C, isoform 1">
    <location>
        <begin position="1"/>
        <end position="150"/>
    </location>
</feature>
<feature type="domain" description="EF-hand 1" evidence="1">
    <location>
        <begin position="7"/>
        <end position="42"/>
    </location>
</feature>
<feature type="domain" description="EF-hand 2" evidence="1">
    <location>
        <begin position="43"/>
        <end position="78"/>
    </location>
</feature>
<feature type="domain" description="EF-hand 3" evidence="1">
    <location>
        <begin position="83"/>
        <end position="118"/>
    </location>
</feature>
<feature type="domain" description="EF-hand 4" evidence="1">
    <location>
        <begin position="119"/>
        <end position="150"/>
    </location>
</feature>
<feature type="binding site" evidence="1">
    <location>
        <position position="56"/>
    </location>
    <ligand>
        <name>Ca(2+)</name>
        <dbReference type="ChEBI" id="CHEBI:29108"/>
        <label>1</label>
    </ligand>
</feature>
<feature type="binding site" evidence="1">
    <location>
        <position position="58"/>
    </location>
    <ligand>
        <name>Ca(2+)</name>
        <dbReference type="ChEBI" id="CHEBI:29108"/>
        <label>1</label>
    </ligand>
</feature>
<feature type="binding site" evidence="1">
    <location>
        <position position="60"/>
    </location>
    <ligand>
        <name>Ca(2+)</name>
        <dbReference type="ChEBI" id="CHEBI:29108"/>
        <label>1</label>
    </ligand>
</feature>
<feature type="binding site" evidence="1">
    <location>
        <position position="62"/>
    </location>
    <ligand>
        <name>Ca(2+)</name>
        <dbReference type="ChEBI" id="CHEBI:29108"/>
        <label>1</label>
    </ligand>
</feature>
<feature type="binding site" evidence="1">
    <location>
        <position position="67"/>
    </location>
    <ligand>
        <name>Ca(2+)</name>
        <dbReference type="ChEBI" id="CHEBI:29108"/>
        <label>1</label>
    </ligand>
</feature>
<feature type="binding site" evidence="1">
    <location>
        <position position="132"/>
    </location>
    <ligand>
        <name>Ca(2+)</name>
        <dbReference type="ChEBI" id="CHEBI:29108"/>
        <label>2</label>
    </ligand>
</feature>
<feature type="binding site" evidence="1">
    <location>
        <position position="134"/>
    </location>
    <ligand>
        <name>Ca(2+)</name>
        <dbReference type="ChEBI" id="CHEBI:29108"/>
        <label>2</label>
    </ligand>
</feature>
<feature type="binding site" evidence="1">
    <location>
        <position position="136"/>
    </location>
    <ligand>
        <name>Ca(2+)</name>
        <dbReference type="ChEBI" id="CHEBI:29108"/>
        <label>2</label>
    </ligand>
</feature>
<feature type="binding site" evidence="1">
    <location>
        <position position="138"/>
    </location>
    <ligand>
        <name>Ca(2+)</name>
        <dbReference type="ChEBI" id="CHEBI:29108"/>
        <label>2</label>
    </ligand>
</feature>
<feature type="binding site" evidence="1">
    <location>
        <position position="143"/>
    </location>
    <ligand>
        <name>Ca(2+)</name>
        <dbReference type="ChEBI" id="CHEBI:29108"/>
        <label>2</label>
    </ligand>
</feature>
<feature type="modified residue" description="N-acetylmethionine" evidence="2">
    <location>
        <position position="1"/>
    </location>
</feature>
<name>TNNC1_HOMAM</name>
<dbReference type="PIR" id="S18394">
    <property type="entry name" value="S18394"/>
</dbReference>
<dbReference type="RefSeq" id="XP_042205821.1">
    <property type="nucleotide sequence ID" value="XM_042349887.1"/>
</dbReference>
<dbReference type="SMR" id="P29289"/>
<dbReference type="Allergome" id="6090">
    <property type="allergen name" value="Hom a 6"/>
</dbReference>
<dbReference type="iPTMnet" id="P29289"/>
<dbReference type="EnsemblMetazoa" id="XM_042349887.1">
    <property type="protein sequence ID" value="XP_042205821.1"/>
    <property type="gene ID" value="LOC121855060"/>
</dbReference>
<dbReference type="GeneID" id="121855060"/>
<dbReference type="OrthoDB" id="26525at2759"/>
<dbReference type="GO" id="GO:0016460">
    <property type="term" value="C:myosin II complex"/>
    <property type="evidence" value="ECO:0007669"/>
    <property type="project" value="TreeGrafter"/>
</dbReference>
<dbReference type="GO" id="GO:0005509">
    <property type="term" value="F:calcium ion binding"/>
    <property type="evidence" value="ECO:0007669"/>
    <property type="project" value="InterPro"/>
</dbReference>
<dbReference type="CDD" id="cd00051">
    <property type="entry name" value="EFh"/>
    <property type="match status" value="1"/>
</dbReference>
<dbReference type="FunFam" id="1.10.238.10:FF:000103">
    <property type="entry name" value="Troponin C Ib"/>
    <property type="match status" value="1"/>
</dbReference>
<dbReference type="Gene3D" id="1.10.238.10">
    <property type="entry name" value="EF-hand"/>
    <property type="match status" value="2"/>
</dbReference>
<dbReference type="InterPro" id="IPR050230">
    <property type="entry name" value="CALM/Myosin/TropC-like"/>
</dbReference>
<dbReference type="InterPro" id="IPR011992">
    <property type="entry name" value="EF-hand-dom_pair"/>
</dbReference>
<dbReference type="InterPro" id="IPR018247">
    <property type="entry name" value="EF_Hand_1_Ca_BS"/>
</dbReference>
<dbReference type="InterPro" id="IPR002048">
    <property type="entry name" value="EF_hand_dom"/>
</dbReference>
<dbReference type="PANTHER" id="PTHR23048:SF0">
    <property type="entry name" value="CALMODULIN LIKE 3"/>
    <property type="match status" value="1"/>
</dbReference>
<dbReference type="PANTHER" id="PTHR23048">
    <property type="entry name" value="MYOSIN LIGHT CHAIN 1, 3"/>
    <property type="match status" value="1"/>
</dbReference>
<dbReference type="Pfam" id="PF13499">
    <property type="entry name" value="EF-hand_7"/>
    <property type="match status" value="2"/>
</dbReference>
<dbReference type="SMART" id="SM00054">
    <property type="entry name" value="EFh"/>
    <property type="match status" value="4"/>
</dbReference>
<dbReference type="SUPFAM" id="SSF47473">
    <property type="entry name" value="EF-hand"/>
    <property type="match status" value="1"/>
</dbReference>
<dbReference type="PROSITE" id="PS00018">
    <property type="entry name" value="EF_HAND_1"/>
    <property type="match status" value="2"/>
</dbReference>
<dbReference type="PROSITE" id="PS50222">
    <property type="entry name" value="EF_HAND_2"/>
    <property type="match status" value="4"/>
</dbReference>
<reference key="1">
    <citation type="journal article" date="1991" name="Arch. Biochem. Biophys.">
        <title>Lobster troponin C: amino acid sequences of three isoforms.</title>
        <authorList>
            <person name="Garone L."/>
            <person name="Theibert J.L."/>
            <person name="Miegel A."/>
            <person name="Maeda Y."/>
            <person name="Murphy C."/>
            <person name="Collins J.H."/>
        </authorList>
    </citation>
    <scope>PROTEIN SEQUENCE</scope>
    <scope>ACETYLATION AT MET-1</scope>
    <source>
        <tissue>Abdominal flexor muscle</tissue>
    </source>
</reference>
<protein>
    <recommendedName>
        <fullName>Troponin C, isoform 1</fullName>
    </recommendedName>
</protein>
<evidence type="ECO:0000255" key="1">
    <source>
        <dbReference type="PROSITE-ProRule" id="PRU00448"/>
    </source>
</evidence>
<evidence type="ECO:0000269" key="2">
    <source>
    </source>
</evidence>
<evidence type="ECO:0000305" key="3"/>
<keyword id="KW-0007">Acetylation</keyword>
<keyword id="KW-0106">Calcium</keyword>
<keyword id="KW-0903">Direct protein sequencing</keyword>
<keyword id="KW-0479">Metal-binding</keyword>
<keyword id="KW-0514">Muscle protein</keyword>
<keyword id="KW-0677">Repeat</keyword>
<sequence>MDTLDEDQVQALQKAFNSFDTDDKGFITPDTVGVILRMMGVKISDRHLQEVISETDEDGSGEIEFEEFAALAAKFLSEEDEEALKKELKEAFRIYDRGGNGYITVHTLKEILRELDNKLTEDNLDSIIEEVDEDGSGTIDFNEFMKMMNG</sequence>
<accession>P29289</accession>